<keyword id="KW-0963">Cytoplasm</keyword>
<keyword id="KW-0227">DNA damage</keyword>
<keyword id="KW-0228">DNA excision</keyword>
<keyword id="KW-0234">DNA repair</keyword>
<keyword id="KW-0267">Excision nuclease</keyword>
<keyword id="KW-1185">Reference proteome</keyword>
<keyword id="KW-0742">SOS response</keyword>
<organism>
    <name type="scientific">Hahella chejuensis (strain KCTC 2396)</name>
    <dbReference type="NCBI Taxonomy" id="349521"/>
    <lineage>
        <taxon>Bacteria</taxon>
        <taxon>Pseudomonadati</taxon>
        <taxon>Pseudomonadota</taxon>
        <taxon>Gammaproteobacteria</taxon>
        <taxon>Oceanospirillales</taxon>
        <taxon>Hahellaceae</taxon>
        <taxon>Hahella</taxon>
    </lineage>
</organism>
<proteinExistence type="inferred from homology"/>
<feature type="chain" id="PRO_0000264900" description="UvrABC system protein C">
    <location>
        <begin position="1"/>
        <end position="612"/>
    </location>
</feature>
<feature type="domain" description="GIY-YIG" evidence="1">
    <location>
        <begin position="18"/>
        <end position="96"/>
    </location>
</feature>
<feature type="domain" description="UVR" evidence="1">
    <location>
        <begin position="208"/>
        <end position="243"/>
    </location>
</feature>
<name>UVRC_HAHCH</name>
<dbReference type="EMBL" id="CP000155">
    <property type="protein sequence ID" value="ABC30757.1"/>
    <property type="molecule type" value="Genomic_DNA"/>
</dbReference>
<dbReference type="RefSeq" id="WP_011397824.1">
    <property type="nucleotide sequence ID" value="NC_007645.1"/>
</dbReference>
<dbReference type="SMR" id="Q2SF17"/>
<dbReference type="STRING" id="349521.HCH_04042"/>
<dbReference type="KEGG" id="hch:HCH_04042"/>
<dbReference type="eggNOG" id="COG0322">
    <property type="taxonomic scope" value="Bacteria"/>
</dbReference>
<dbReference type="HOGENOM" id="CLU_014841_3_0_6"/>
<dbReference type="OrthoDB" id="9804933at2"/>
<dbReference type="Proteomes" id="UP000000238">
    <property type="component" value="Chromosome"/>
</dbReference>
<dbReference type="GO" id="GO:0005737">
    <property type="term" value="C:cytoplasm"/>
    <property type="evidence" value="ECO:0007669"/>
    <property type="project" value="UniProtKB-SubCell"/>
</dbReference>
<dbReference type="GO" id="GO:0009380">
    <property type="term" value="C:excinuclease repair complex"/>
    <property type="evidence" value="ECO:0007669"/>
    <property type="project" value="InterPro"/>
</dbReference>
<dbReference type="GO" id="GO:0003677">
    <property type="term" value="F:DNA binding"/>
    <property type="evidence" value="ECO:0007669"/>
    <property type="project" value="UniProtKB-UniRule"/>
</dbReference>
<dbReference type="GO" id="GO:0009381">
    <property type="term" value="F:excinuclease ABC activity"/>
    <property type="evidence" value="ECO:0007669"/>
    <property type="project" value="UniProtKB-UniRule"/>
</dbReference>
<dbReference type="GO" id="GO:0006289">
    <property type="term" value="P:nucleotide-excision repair"/>
    <property type="evidence" value="ECO:0007669"/>
    <property type="project" value="UniProtKB-UniRule"/>
</dbReference>
<dbReference type="GO" id="GO:0009432">
    <property type="term" value="P:SOS response"/>
    <property type="evidence" value="ECO:0007669"/>
    <property type="project" value="UniProtKB-UniRule"/>
</dbReference>
<dbReference type="CDD" id="cd10434">
    <property type="entry name" value="GIY-YIG_UvrC_Cho"/>
    <property type="match status" value="1"/>
</dbReference>
<dbReference type="FunFam" id="1.10.150.20:FF:000005">
    <property type="entry name" value="UvrABC system protein C"/>
    <property type="match status" value="1"/>
</dbReference>
<dbReference type="FunFam" id="3.30.420.340:FF:000001">
    <property type="entry name" value="UvrABC system protein C"/>
    <property type="match status" value="1"/>
</dbReference>
<dbReference type="FunFam" id="3.40.1440.10:FF:000001">
    <property type="entry name" value="UvrABC system protein C"/>
    <property type="match status" value="1"/>
</dbReference>
<dbReference type="Gene3D" id="1.10.150.20">
    <property type="entry name" value="5' to 3' exonuclease, C-terminal subdomain"/>
    <property type="match status" value="1"/>
</dbReference>
<dbReference type="Gene3D" id="3.40.1440.10">
    <property type="entry name" value="GIY-YIG endonuclease"/>
    <property type="match status" value="1"/>
</dbReference>
<dbReference type="Gene3D" id="4.10.860.10">
    <property type="entry name" value="UVR domain"/>
    <property type="match status" value="1"/>
</dbReference>
<dbReference type="Gene3D" id="3.30.420.340">
    <property type="entry name" value="UvrC, RNAse H endonuclease domain"/>
    <property type="match status" value="1"/>
</dbReference>
<dbReference type="HAMAP" id="MF_00203">
    <property type="entry name" value="UvrC"/>
    <property type="match status" value="1"/>
</dbReference>
<dbReference type="InterPro" id="IPR000305">
    <property type="entry name" value="GIY-YIG_endonuc"/>
</dbReference>
<dbReference type="InterPro" id="IPR035901">
    <property type="entry name" value="GIY-YIG_endonuc_sf"/>
</dbReference>
<dbReference type="InterPro" id="IPR047296">
    <property type="entry name" value="GIY-YIG_UvrC_Cho"/>
</dbReference>
<dbReference type="InterPro" id="IPR003583">
    <property type="entry name" value="Hlx-hairpin-Hlx_DNA-bd_motif"/>
</dbReference>
<dbReference type="InterPro" id="IPR010994">
    <property type="entry name" value="RuvA_2-like"/>
</dbReference>
<dbReference type="InterPro" id="IPR001943">
    <property type="entry name" value="UVR_dom"/>
</dbReference>
<dbReference type="InterPro" id="IPR036876">
    <property type="entry name" value="UVR_dom_sf"/>
</dbReference>
<dbReference type="InterPro" id="IPR050066">
    <property type="entry name" value="UvrABC_protein_C"/>
</dbReference>
<dbReference type="InterPro" id="IPR004791">
    <property type="entry name" value="UvrC"/>
</dbReference>
<dbReference type="InterPro" id="IPR001162">
    <property type="entry name" value="UvrC_RNase_H_dom"/>
</dbReference>
<dbReference type="InterPro" id="IPR038476">
    <property type="entry name" value="UvrC_RNase_H_dom_sf"/>
</dbReference>
<dbReference type="NCBIfam" id="NF001824">
    <property type="entry name" value="PRK00558.1-5"/>
    <property type="match status" value="1"/>
</dbReference>
<dbReference type="NCBIfam" id="TIGR00194">
    <property type="entry name" value="uvrC"/>
    <property type="match status" value="1"/>
</dbReference>
<dbReference type="PANTHER" id="PTHR30562:SF1">
    <property type="entry name" value="UVRABC SYSTEM PROTEIN C"/>
    <property type="match status" value="1"/>
</dbReference>
<dbReference type="PANTHER" id="PTHR30562">
    <property type="entry name" value="UVRC/OXIDOREDUCTASE"/>
    <property type="match status" value="1"/>
</dbReference>
<dbReference type="Pfam" id="PF01541">
    <property type="entry name" value="GIY-YIG"/>
    <property type="match status" value="1"/>
</dbReference>
<dbReference type="Pfam" id="PF14520">
    <property type="entry name" value="HHH_5"/>
    <property type="match status" value="1"/>
</dbReference>
<dbReference type="Pfam" id="PF02151">
    <property type="entry name" value="UVR"/>
    <property type="match status" value="1"/>
</dbReference>
<dbReference type="Pfam" id="PF22920">
    <property type="entry name" value="UvrC_RNaseH"/>
    <property type="match status" value="1"/>
</dbReference>
<dbReference type="Pfam" id="PF08459">
    <property type="entry name" value="UvrC_RNaseH_dom"/>
    <property type="match status" value="1"/>
</dbReference>
<dbReference type="SMART" id="SM00465">
    <property type="entry name" value="GIYc"/>
    <property type="match status" value="1"/>
</dbReference>
<dbReference type="SMART" id="SM00278">
    <property type="entry name" value="HhH1"/>
    <property type="match status" value="2"/>
</dbReference>
<dbReference type="SUPFAM" id="SSF46600">
    <property type="entry name" value="C-terminal UvrC-binding domain of UvrB"/>
    <property type="match status" value="1"/>
</dbReference>
<dbReference type="SUPFAM" id="SSF82771">
    <property type="entry name" value="GIY-YIG endonuclease"/>
    <property type="match status" value="1"/>
</dbReference>
<dbReference type="SUPFAM" id="SSF47781">
    <property type="entry name" value="RuvA domain 2-like"/>
    <property type="match status" value="1"/>
</dbReference>
<dbReference type="PROSITE" id="PS50164">
    <property type="entry name" value="GIY_YIG"/>
    <property type="match status" value="1"/>
</dbReference>
<dbReference type="PROSITE" id="PS50151">
    <property type="entry name" value="UVR"/>
    <property type="match status" value="1"/>
</dbReference>
<dbReference type="PROSITE" id="PS50165">
    <property type="entry name" value="UVRC"/>
    <property type="match status" value="1"/>
</dbReference>
<evidence type="ECO:0000255" key="1">
    <source>
        <dbReference type="HAMAP-Rule" id="MF_00203"/>
    </source>
</evidence>
<reference key="1">
    <citation type="journal article" date="2005" name="Nucleic Acids Res.">
        <title>Genomic blueprint of Hahella chejuensis, a marine microbe producing an algicidal agent.</title>
        <authorList>
            <person name="Jeong H."/>
            <person name="Yim J.H."/>
            <person name="Lee C."/>
            <person name="Choi S.-H."/>
            <person name="Park Y.K."/>
            <person name="Yoon S.H."/>
            <person name="Hur C.-G."/>
            <person name="Kang H.-Y."/>
            <person name="Kim D."/>
            <person name="Lee H.H."/>
            <person name="Park K.H."/>
            <person name="Park S.-H."/>
            <person name="Park H.-S."/>
            <person name="Lee H.K."/>
            <person name="Oh T.K."/>
            <person name="Kim J.F."/>
        </authorList>
    </citation>
    <scope>NUCLEOTIDE SEQUENCE [LARGE SCALE GENOMIC DNA]</scope>
    <source>
        <strain>KCTC 2396</strain>
    </source>
</reference>
<sequence length="612" mass="69067">MESQSIFDAKSFLKQLTTRPGVYRMMDARGEVLYVGKARNLKNRVSSYFRNTGVSIKTRALVEKIADIEITITHSETEALLLEQNLIKTLKPPYNILLRDDKSYPYIYLSSHDEYPSLTFRRVRQKKTGKGRFFGPYTSAAAVRESLALLQKIFRIRQCEDSFFSNRSRPCLQHQIGRCSAPCVGLIDPQSYAEDMSHATMFLEGRNPEIINETIQQMEVASAQLDFERAAVLRDQVDYLRRVQEQQAIEGVARDIDAFALSSSLELVVVHGLFIRAGRVVGSKSFYLSERLESDDGDLLSSFLNQYYFGEHAIYGLPQEITTTVGLTDKDALKAAFKEVFNRNVRIEHNVRSNRAEWLHLAQTNANQALSTRMQSQDAQLQRWQSFCDALNLEASVKRVECFDVSHTFGEATVASCVVFGPEGAIKDLYRRYNIKDVPAGDDYHAMEQALTRRYSKLKDSDVGLPDIILIDGGKGQLGIAHQVFDELQITGVTLIGVAKGVTRKPGMETLFISADNSILNLPGDSTALHLIQQIRDEAHRFAITGHRNQRNKKRTQSVLDAVPGIGPKRRRDLLNYFGSVRNIERASLEEIKRVPGISEVIAQTIYAAFHE</sequence>
<comment type="function">
    <text evidence="1">The UvrABC repair system catalyzes the recognition and processing of DNA lesions. UvrC both incises the 5' and 3' sides of the lesion. The N-terminal half is responsible for the 3' incision and the C-terminal half is responsible for the 5' incision.</text>
</comment>
<comment type="subunit">
    <text evidence="1">Interacts with UvrB in an incision complex.</text>
</comment>
<comment type="subcellular location">
    <subcellularLocation>
        <location evidence="1">Cytoplasm</location>
    </subcellularLocation>
</comment>
<comment type="similarity">
    <text evidence="1">Belongs to the UvrC family.</text>
</comment>
<accession>Q2SF17</accession>
<gene>
    <name evidence="1" type="primary">uvrC</name>
    <name type="ordered locus">HCH_04042</name>
</gene>
<protein>
    <recommendedName>
        <fullName evidence="1">UvrABC system protein C</fullName>
        <shortName evidence="1">Protein UvrC</shortName>
    </recommendedName>
    <alternativeName>
        <fullName evidence="1">Excinuclease ABC subunit C</fullName>
    </alternativeName>
</protein>